<feature type="chain" id="PRO_1000019987" description="Probable cytosol aminopeptidase">
    <location>
        <begin position="1"/>
        <end position="505"/>
    </location>
</feature>
<feature type="active site" evidence="1">
    <location>
        <position position="280"/>
    </location>
</feature>
<feature type="active site" evidence="1">
    <location>
        <position position="354"/>
    </location>
</feature>
<feature type="binding site" evidence="1">
    <location>
        <position position="268"/>
    </location>
    <ligand>
        <name>Mn(2+)</name>
        <dbReference type="ChEBI" id="CHEBI:29035"/>
        <label>2</label>
    </ligand>
</feature>
<feature type="binding site" evidence="1">
    <location>
        <position position="273"/>
    </location>
    <ligand>
        <name>Mn(2+)</name>
        <dbReference type="ChEBI" id="CHEBI:29035"/>
        <label>1</label>
    </ligand>
</feature>
<feature type="binding site" evidence="1">
    <location>
        <position position="273"/>
    </location>
    <ligand>
        <name>Mn(2+)</name>
        <dbReference type="ChEBI" id="CHEBI:29035"/>
        <label>2</label>
    </ligand>
</feature>
<feature type="binding site" evidence="1">
    <location>
        <position position="291"/>
    </location>
    <ligand>
        <name>Mn(2+)</name>
        <dbReference type="ChEBI" id="CHEBI:29035"/>
        <label>2</label>
    </ligand>
</feature>
<feature type="binding site" evidence="1">
    <location>
        <position position="350"/>
    </location>
    <ligand>
        <name>Mn(2+)</name>
        <dbReference type="ChEBI" id="CHEBI:29035"/>
        <label>1</label>
    </ligand>
</feature>
<feature type="binding site" evidence="1">
    <location>
        <position position="352"/>
    </location>
    <ligand>
        <name>Mn(2+)</name>
        <dbReference type="ChEBI" id="CHEBI:29035"/>
        <label>1</label>
    </ligand>
</feature>
<feature type="binding site" evidence="1">
    <location>
        <position position="352"/>
    </location>
    <ligand>
        <name>Mn(2+)</name>
        <dbReference type="ChEBI" id="CHEBI:29035"/>
        <label>2</label>
    </ligand>
</feature>
<gene>
    <name evidence="1" type="primary">pepA</name>
    <name type="ordered locus">Sfum_2081</name>
</gene>
<comment type="function">
    <text evidence="1">Presumably involved in the processing and regular turnover of intracellular proteins. Catalyzes the removal of unsubstituted N-terminal amino acids from various peptides.</text>
</comment>
<comment type="catalytic activity">
    <reaction evidence="1">
        <text>Release of an N-terminal amino acid, Xaa-|-Yaa-, in which Xaa is preferably Leu, but may be other amino acids including Pro although not Arg or Lys, and Yaa may be Pro. Amino acid amides and methyl esters are also readily hydrolyzed, but rates on arylamides are exceedingly low.</text>
        <dbReference type="EC" id="3.4.11.1"/>
    </reaction>
</comment>
<comment type="catalytic activity">
    <reaction evidence="1">
        <text>Release of an N-terminal amino acid, preferentially leucine, but not glutamic or aspartic acids.</text>
        <dbReference type="EC" id="3.4.11.10"/>
    </reaction>
</comment>
<comment type="cofactor">
    <cofactor evidence="1">
        <name>Mn(2+)</name>
        <dbReference type="ChEBI" id="CHEBI:29035"/>
    </cofactor>
    <text evidence="1">Binds 2 manganese ions per subunit.</text>
</comment>
<comment type="subcellular location">
    <subcellularLocation>
        <location evidence="1">Cytoplasm</location>
    </subcellularLocation>
</comment>
<comment type="similarity">
    <text evidence="1">Belongs to the peptidase M17 family.</text>
</comment>
<keyword id="KW-0031">Aminopeptidase</keyword>
<keyword id="KW-0963">Cytoplasm</keyword>
<keyword id="KW-0378">Hydrolase</keyword>
<keyword id="KW-0464">Manganese</keyword>
<keyword id="KW-0479">Metal-binding</keyword>
<keyword id="KW-0645">Protease</keyword>
<keyword id="KW-1185">Reference proteome</keyword>
<organism>
    <name type="scientific">Syntrophobacter fumaroxidans (strain DSM 10017 / MPOB)</name>
    <dbReference type="NCBI Taxonomy" id="335543"/>
    <lineage>
        <taxon>Bacteria</taxon>
        <taxon>Pseudomonadati</taxon>
        <taxon>Thermodesulfobacteriota</taxon>
        <taxon>Syntrophobacteria</taxon>
        <taxon>Syntrophobacterales</taxon>
        <taxon>Syntrophobacteraceae</taxon>
        <taxon>Syntrophobacter</taxon>
    </lineage>
</organism>
<protein>
    <recommendedName>
        <fullName evidence="1">Probable cytosol aminopeptidase</fullName>
        <ecNumber evidence="1">3.4.11.1</ecNumber>
    </recommendedName>
    <alternativeName>
        <fullName evidence="1">Leucine aminopeptidase</fullName>
        <shortName evidence="1">LAP</shortName>
        <ecNumber evidence="1">3.4.11.10</ecNumber>
    </alternativeName>
    <alternativeName>
        <fullName evidence="1">Leucyl aminopeptidase</fullName>
    </alternativeName>
</protein>
<accession>A0LK12</accession>
<dbReference type="EC" id="3.4.11.1" evidence="1"/>
<dbReference type="EC" id="3.4.11.10" evidence="1"/>
<dbReference type="EMBL" id="CP000478">
    <property type="protein sequence ID" value="ABK17764.1"/>
    <property type="molecule type" value="Genomic_DNA"/>
</dbReference>
<dbReference type="RefSeq" id="WP_011698933.1">
    <property type="nucleotide sequence ID" value="NC_008554.1"/>
</dbReference>
<dbReference type="SMR" id="A0LK12"/>
<dbReference type="FunCoup" id="A0LK12">
    <property type="interactions" value="416"/>
</dbReference>
<dbReference type="STRING" id="335543.Sfum_2081"/>
<dbReference type="KEGG" id="sfu:Sfum_2081"/>
<dbReference type="eggNOG" id="COG0260">
    <property type="taxonomic scope" value="Bacteria"/>
</dbReference>
<dbReference type="HOGENOM" id="CLU_013734_2_2_7"/>
<dbReference type="InParanoid" id="A0LK12"/>
<dbReference type="OrthoDB" id="9809354at2"/>
<dbReference type="Proteomes" id="UP000001784">
    <property type="component" value="Chromosome"/>
</dbReference>
<dbReference type="GO" id="GO:0005737">
    <property type="term" value="C:cytoplasm"/>
    <property type="evidence" value="ECO:0007669"/>
    <property type="project" value="UniProtKB-SubCell"/>
</dbReference>
<dbReference type="GO" id="GO:0030145">
    <property type="term" value="F:manganese ion binding"/>
    <property type="evidence" value="ECO:0007669"/>
    <property type="project" value="UniProtKB-UniRule"/>
</dbReference>
<dbReference type="GO" id="GO:0070006">
    <property type="term" value="F:metalloaminopeptidase activity"/>
    <property type="evidence" value="ECO:0007669"/>
    <property type="project" value="InterPro"/>
</dbReference>
<dbReference type="GO" id="GO:0006508">
    <property type="term" value="P:proteolysis"/>
    <property type="evidence" value="ECO:0007669"/>
    <property type="project" value="UniProtKB-KW"/>
</dbReference>
<dbReference type="CDD" id="cd00433">
    <property type="entry name" value="Peptidase_M17"/>
    <property type="match status" value="1"/>
</dbReference>
<dbReference type="Gene3D" id="3.40.220.10">
    <property type="entry name" value="Leucine Aminopeptidase, subunit E, domain 1"/>
    <property type="match status" value="1"/>
</dbReference>
<dbReference type="Gene3D" id="3.40.630.10">
    <property type="entry name" value="Zn peptidases"/>
    <property type="match status" value="1"/>
</dbReference>
<dbReference type="HAMAP" id="MF_00181">
    <property type="entry name" value="Cytosol_peptidase_M17"/>
    <property type="match status" value="1"/>
</dbReference>
<dbReference type="InterPro" id="IPR011356">
    <property type="entry name" value="Leucine_aapep/pepB"/>
</dbReference>
<dbReference type="InterPro" id="IPR043472">
    <property type="entry name" value="Macro_dom-like"/>
</dbReference>
<dbReference type="InterPro" id="IPR000819">
    <property type="entry name" value="Peptidase_M17_C"/>
</dbReference>
<dbReference type="InterPro" id="IPR023042">
    <property type="entry name" value="Peptidase_M17_leu_NH2_pept"/>
</dbReference>
<dbReference type="InterPro" id="IPR008283">
    <property type="entry name" value="Peptidase_M17_N"/>
</dbReference>
<dbReference type="NCBIfam" id="NF002074">
    <property type="entry name" value="PRK00913.1-4"/>
    <property type="match status" value="1"/>
</dbReference>
<dbReference type="PANTHER" id="PTHR11963:SF23">
    <property type="entry name" value="CYTOSOL AMINOPEPTIDASE"/>
    <property type="match status" value="1"/>
</dbReference>
<dbReference type="PANTHER" id="PTHR11963">
    <property type="entry name" value="LEUCINE AMINOPEPTIDASE-RELATED"/>
    <property type="match status" value="1"/>
</dbReference>
<dbReference type="Pfam" id="PF00883">
    <property type="entry name" value="Peptidase_M17"/>
    <property type="match status" value="1"/>
</dbReference>
<dbReference type="Pfam" id="PF02789">
    <property type="entry name" value="Peptidase_M17_N"/>
    <property type="match status" value="1"/>
</dbReference>
<dbReference type="PRINTS" id="PR00481">
    <property type="entry name" value="LAMNOPPTDASE"/>
</dbReference>
<dbReference type="SUPFAM" id="SSF52949">
    <property type="entry name" value="Macro domain-like"/>
    <property type="match status" value="1"/>
</dbReference>
<dbReference type="SUPFAM" id="SSF53187">
    <property type="entry name" value="Zn-dependent exopeptidases"/>
    <property type="match status" value="1"/>
</dbReference>
<dbReference type="PROSITE" id="PS00631">
    <property type="entry name" value="CYTOSOL_AP"/>
    <property type="match status" value="1"/>
</dbReference>
<reference key="1">
    <citation type="submission" date="2006-10" db="EMBL/GenBank/DDBJ databases">
        <title>Complete sequence of Syntrophobacter fumaroxidans MPOB.</title>
        <authorList>
            <consortium name="US DOE Joint Genome Institute"/>
            <person name="Copeland A."/>
            <person name="Lucas S."/>
            <person name="Lapidus A."/>
            <person name="Barry K."/>
            <person name="Detter J.C."/>
            <person name="Glavina del Rio T."/>
            <person name="Hammon N."/>
            <person name="Israni S."/>
            <person name="Pitluck S."/>
            <person name="Goltsman E.G."/>
            <person name="Martinez M."/>
            <person name="Schmutz J."/>
            <person name="Larimer F."/>
            <person name="Land M."/>
            <person name="Hauser L."/>
            <person name="Kyrpides N."/>
            <person name="Kim E."/>
            <person name="Boone D.R."/>
            <person name="Brockman F."/>
            <person name="Culley D."/>
            <person name="Ferry J."/>
            <person name="Gunsalus R."/>
            <person name="McInerney M.J."/>
            <person name="Morrison M."/>
            <person name="Plugge C."/>
            <person name="Rohlin L."/>
            <person name="Scholten J."/>
            <person name="Sieber J."/>
            <person name="Stams A.J.M."/>
            <person name="Worm P."/>
            <person name="Henstra A.M."/>
            <person name="Richardson P."/>
        </authorList>
    </citation>
    <scope>NUCLEOTIDE SEQUENCE [LARGE SCALE GENOMIC DNA]</scope>
    <source>
        <strain>DSM 10017 / MPOB</strain>
    </source>
</reference>
<proteinExistence type="inferred from homology"/>
<name>AMPA_SYNFM</name>
<evidence type="ECO:0000255" key="1">
    <source>
        <dbReference type="HAMAP-Rule" id="MF_00181"/>
    </source>
</evidence>
<sequence>MEIDWQIGPASEWRADALIFFGLEEATEPLPGFKRWLDQHGQWLSASPVLRDFQGKYQEVAVCYGPPEANIPRVVMAGLGTREKFDMERLQGSAAAALNRCRELRLARPAFCLRSFYGLPLMVDSALKEALIGGLTGLHRYEELKTRDIAPSAAPSRLVVLNEYETTPELRALPGAAAAAAAGIILARDLVSSPANRATPAFLADCARRLADRDGCRIEVIGLEKAESMGMGGFAAVARGSRQPACMIVLERFPEADRRESPIVFVGKGITFDTGGISLKPRDHLEEMKQDMAGAAAVLGAFETLGRLGSDRHVVGIMPCTENMPGGNAYKPGDVIRTMSGLTVEVISTDAEGRMVLCDALTYAMRYKPAAVFDIATLTAAVIIALGQRVAAVMANRDILAEAVVDIGAQVGERLWPLPLYDLYFDYLKSDVADFKNVGDRTAGSIVGGMFLKQFVPDTTPWAHLDIAGTAWTDKDLGTTPRGGTGFGVRTLTELALQWPDLGIR</sequence>